<organism>
    <name type="scientific">Oryctolagus cuniculus</name>
    <name type="common">Rabbit</name>
    <dbReference type="NCBI Taxonomy" id="9986"/>
    <lineage>
        <taxon>Eukaryota</taxon>
        <taxon>Metazoa</taxon>
        <taxon>Chordata</taxon>
        <taxon>Craniata</taxon>
        <taxon>Vertebrata</taxon>
        <taxon>Euteleostomi</taxon>
        <taxon>Mammalia</taxon>
        <taxon>Eutheria</taxon>
        <taxon>Euarchontoglires</taxon>
        <taxon>Glires</taxon>
        <taxon>Lagomorpha</taxon>
        <taxon>Leporidae</taxon>
        <taxon>Oryctolagus</taxon>
    </lineage>
</organism>
<reference key="1">
    <citation type="journal article" date="1986" name="Immunol. Invest.">
        <title>Nucleotide sequence of cDNA and derived amino acid sequence of rabbit complement component C3 alpha-chain.</title>
        <authorList>
            <person name="Kusano M."/>
            <person name="Choi N.H."/>
            <person name="Tomita M."/>
            <person name="Yamamoto K."/>
            <person name="Migita S."/>
            <person name="Sekiya T."/>
            <person name="Nishimura S."/>
        </authorList>
    </citation>
    <scope>NUCLEOTIDE SEQUENCE [MRNA]</scope>
</reference>
<evidence type="ECO:0000250" key="1">
    <source>
        <dbReference type="UniProtKB" id="P01024"/>
    </source>
</evidence>
<evidence type="ECO:0000255" key="2"/>
<evidence type="ECO:0000255" key="3">
    <source>
        <dbReference type="PROSITE-ProRule" id="PRU00295"/>
    </source>
</evidence>
<evidence type="ECO:0000256" key="4">
    <source>
        <dbReference type="SAM" id="MobiDB-lite"/>
    </source>
</evidence>
<proteinExistence type="evidence at transcript level"/>
<feature type="chain" id="PRO_0000005936" description="Complement C3 alpha chain">
    <location>
        <begin position="1" status="less than"/>
        <end position="726"/>
    </location>
</feature>
<feature type="chain" id="PRO_0000462534" description="Complement C3b">
    <location>
        <begin position="1" status="less than"/>
        <end position="726"/>
    </location>
</feature>
<feature type="domain" description="NTR" evidence="3">
    <location>
        <begin position="581"/>
        <end position="724"/>
    </location>
</feature>
<feature type="region of interest" description="Disordered" evidence="4">
    <location>
        <begin position="1"/>
        <end position="21"/>
    </location>
</feature>
<feature type="region of interest" description="Interaction with CFP/properdin" evidence="1">
    <location>
        <begin position="697"/>
        <end position="722"/>
    </location>
</feature>
<feature type="site" description="Coordinates Mg(2+) for interaction with Complement factor B Bb fragment (CFB)" evidence="1">
    <location>
        <position position="726"/>
    </location>
</feature>
<feature type="modified residue" description="Phosphoserine" evidence="1">
    <location>
        <position position="31"/>
    </location>
</feature>
<feature type="modified residue" description="Phosphoserine" evidence="1">
    <location>
        <position position="384"/>
    </location>
</feature>
<feature type="modified residue" description="Phosphoserine" evidence="1">
    <location>
        <position position="636"/>
    </location>
</feature>
<feature type="glycosylation site" description="N-linked (GlcNAc...) asparagine" evidence="2">
    <location>
        <position position="2"/>
    </location>
</feature>
<feature type="glycosylation site" description="N-linked (GlcNAc...) asparagine" evidence="2">
    <location>
        <position position="233"/>
    </location>
</feature>
<feature type="glycosylation site" description="N-linked (GlcNAc...) asparagine" evidence="2">
    <location>
        <position position="680"/>
    </location>
</feature>
<feature type="disulfide bond" evidence="1">
    <location>
        <begin position="581"/>
        <end position="653"/>
    </location>
</feature>
<feature type="disulfide bond" evidence="1">
    <location>
        <begin position="600"/>
        <end position="724"/>
    </location>
</feature>
<feature type="cross-link" description="Isoglutamyl cysteine thioester (Cys-Gln)" evidence="1">
    <location>
        <begin position="73"/>
        <end position="76"/>
    </location>
</feature>
<feature type="non-terminal residue">
    <location>
        <position position="1"/>
    </location>
</feature>
<name>CO3_RABIT</name>
<dbReference type="EMBL" id="M32434">
    <property type="protein sequence ID" value="AAA31190.1"/>
    <property type="molecule type" value="mRNA"/>
</dbReference>
<dbReference type="PIR" id="A27602">
    <property type="entry name" value="A27602"/>
</dbReference>
<dbReference type="RefSeq" id="NP_001075755.1">
    <property type="nucleotide sequence ID" value="NM_001082286.1"/>
</dbReference>
<dbReference type="SMR" id="P12247"/>
<dbReference type="STRING" id="9986.ENSOCUP00000006634"/>
<dbReference type="GlyCosmos" id="P12247">
    <property type="glycosylation" value="3 sites, No reported glycans"/>
</dbReference>
<dbReference type="PaxDb" id="9986-ENSOCUP00000007209"/>
<dbReference type="eggNOG" id="KOG1366">
    <property type="taxonomic scope" value="Eukaryota"/>
</dbReference>
<dbReference type="InParanoid" id="P12247"/>
<dbReference type="Proteomes" id="UP000001811">
    <property type="component" value="Unplaced"/>
</dbReference>
<dbReference type="GO" id="GO:0005615">
    <property type="term" value="C:extracellular space"/>
    <property type="evidence" value="ECO:0007669"/>
    <property type="project" value="InterPro"/>
</dbReference>
<dbReference type="GO" id="GO:0006957">
    <property type="term" value="P:complement activation, alternative pathway"/>
    <property type="evidence" value="ECO:0007669"/>
    <property type="project" value="UniProtKB-KW"/>
</dbReference>
<dbReference type="GO" id="GO:0006958">
    <property type="term" value="P:complement activation, classical pathway"/>
    <property type="evidence" value="ECO:0007669"/>
    <property type="project" value="UniProtKB-KW"/>
</dbReference>
<dbReference type="GO" id="GO:0006954">
    <property type="term" value="P:inflammatory response"/>
    <property type="evidence" value="ECO:0007669"/>
    <property type="project" value="UniProtKB-KW"/>
</dbReference>
<dbReference type="CDD" id="cd02896">
    <property type="entry name" value="complement_C3_C4_C5"/>
    <property type="match status" value="1"/>
</dbReference>
<dbReference type="CDD" id="cd03583">
    <property type="entry name" value="NTR_complement_C3"/>
    <property type="match status" value="1"/>
</dbReference>
<dbReference type="FunFam" id="1.50.10.20:FF:000008">
    <property type="entry name" value="Complement C3"/>
    <property type="match status" value="1"/>
</dbReference>
<dbReference type="FunFam" id="2.40.50.120:FF:000013">
    <property type="entry name" value="Complement C3"/>
    <property type="match status" value="1"/>
</dbReference>
<dbReference type="FunFam" id="2.60.40.690:FF:000004">
    <property type="entry name" value="Complement C3"/>
    <property type="match status" value="1"/>
</dbReference>
<dbReference type="Gene3D" id="1.50.10.20">
    <property type="match status" value="1"/>
</dbReference>
<dbReference type="Gene3D" id="2.40.50.120">
    <property type="match status" value="1"/>
</dbReference>
<dbReference type="Gene3D" id="2.60.120.1540">
    <property type="match status" value="1"/>
</dbReference>
<dbReference type="Gene3D" id="2.60.40.690">
    <property type="entry name" value="Alpha-macroglobulin, receptor-binding domain"/>
    <property type="match status" value="1"/>
</dbReference>
<dbReference type="InterPro" id="IPR009048">
    <property type="entry name" value="A-macroglobulin_rcpt-bd"/>
</dbReference>
<dbReference type="InterPro" id="IPR036595">
    <property type="entry name" value="A-macroglobulin_rcpt-bd_sf"/>
</dbReference>
<dbReference type="InterPro" id="IPR050473">
    <property type="entry name" value="A2M/Complement_sys"/>
</dbReference>
<dbReference type="InterPro" id="IPR047565">
    <property type="entry name" value="Alpha-macroglob_thiol-ester_cl"/>
</dbReference>
<dbReference type="InterPro" id="IPR011626">
    <property type="entry name" value="Alpha-macroglobulin_TED"/>
</dbReference>
<dbReference type="InterPro" id="IPR049466">
    <property type="entry name" value="C3_CUB1"/>
</dbReference>
<dbReference type="InterPro" id="IPR048848">
    <property type="entry name" value="C3_CUB2"/>
</dbReference>
<dbReference type="InterPro" id="IPR019742">
    <property type="entry name" value="MacrogloblnA2_CS"/>
</dbReference>
<dbReference type="InterPro" id="IPR001134">
    <property type="entry name" value="Netrin_domain"/>
</dbReference>
<dbReference type="InterPro" id="IPR018933">
    <property type="entry name" value="Netrin_module_non-TIMP"/>
</dbReference>
<dbReference type="InterPro" id="IPR035815">
    <property type="entry name" value="NTR_complement_C3"/>
</dbReference>
<dbReference type="InterPro" id="IPR008930">
    <property type="entry name" value="Terpenoid_cyclase/PrenylTrfase"/>
</dbReference>
<dbReference type="InterPro" id="IPR008993">
    <property type="entry name" value="TIMP-like_OB-fold"/>
</dbReference>
<dbReference type="PANTHER" id="PTHR11412:SF81">
    <property type="entry name" value="COMPLEMENT C3"/>
    <property type="match status" value="1"/>
</dbReference>
<dbReference type="PANTHER" id="PTHR11412">
    <property type="entry name" value="MACROGLOBULIN / COMPLEMENT"/>
    <property type="match status" value="1"/>
</dbReference>
<dbReference type="Pfam" id="PF07677">
    <property type="entry name" value="A2M_recep"/>
    <property type="match status" value="1"/>
</dbReference>
<dbReference type="Pfam" id="PF21406">
    <property type="entry name" value="C3_CUB1"/>
    <property type="match status" value="1"/>
</dbReference>
<dbReference type="Pfam" id="PF21308">
    <property type="entry name" value="C3_CUB2"/>
    <property type="match status" value="1"/>
</dbReference>
<dbReference type="Pfam" id="PF01759">
    <property type="entry name" value="NTR"/>
    <property type="match status" value="1"/>
</dbReference>
<dbReference type="Pfam" id="PF07678">
    <property type="entry name" value="TED_complement"/>
    <property type="match status" value="1"/>
</dbReference>
<dbReference type="SFLD" id="SFLDG01179">
    <property type="entry name" value="Complement_C3/C4_Like"/>
    <property type="match status" value="1"/>
</dbReference>
<dbReference type="SMART" id="SM01361">
    <property type="entry name" value="A2M_recep"/>
    <property type="match status" value="1"/>
</dbReference>
<dbReference type="SMART" id="SM00643">
    <property type="entry name" value="C345C"/>
    <property type="match status" value="1"/>
</dbReference>
<dbReference type="SMART" id="SM01419">
    <property type="entry name" value="Thiol-ester_cl"/>
    <property type="match status" value="1"/>
</dbReference>
<dbReference type="SUPFAM" id="SSF49410">
    <property type="entry name" value="Alpha-macroglobulin receptor domain"/>
    <property type="match status" value="1"/>
</dbReference>
<dbReference type="SUPFAM" id="SSF48239">
    <property type="entry name" value="Terpenoid cyclases/Protein prenyltransferases"/>
    <property type="match status" value="1"/>
</dbReference>
<dbReference type="SUPFAM" id="SSF50242">
    <property type="entry name" value="TIMP-like"/>
    <property type="match status" value="1"/>
</dbReference>
<dbReference type="PROSITE" id="PS00477">
    <property type="entry name" value="ALPHA_2_MACROGLOBULIN"/>
    <property type="match status" value="1"/>
</dbReference>
<dbReference type="PROSITE" id="PS50189">
    <property type="entry name" value="NTR"/>
    <property type="match status" value="1"/>
</dbReference>
<accession>P12247</accession>
<keyword id="KW-0179">Complement alternate pathway</keyword>
<keyword id="KW-0180">Complement pathway</keyword>
<keyword id="KW-1015">Disulfide bond</keyword>
<keyword id="KW-0325">Glycoprotein</keyword>
<keyword id="KW-0391">Immunity</keyword>
<keyword id="KW-0395">Inflammatory response</keyword>
<keyword id="KW-0399">Innate immunity</keyword>
<keyword id="KW-0597">Phosphoprotein</keyword>
<keyword id="KW-1185">Reference proteome</keyword>
<keyword id="KW-0964">Secreted</keyword>
<keyword id="KW-0882">Thioester bond</keyword>
<gene>
    <name type="primary">C3</name>
</gene>
<protein>
    <recommendedName>
        <fullName>Complement C3 alpha chain</fullName>
    </recommendedName>
    <component>
        <recommendedName>
            <fullName>Complement C3b</fullName>
        </recommendedName>
    </component>
</protein>
<sequence length="726" mass="81844">MNKTVAVRTLDPENLGQGGVQKEEIPSADISDQVPGTESETKILLQGTPVAQMTEDAIDGERLKHLIVTGSGCGEQNMIAMTHTVIAVHYLDHTEQWDKFSLEKRQEALELIKKGYTQQLAFKQPNSAYAAFLNRAPSTWLTAYVVKVFSLAVNLIAIDSQVLCGAVKWLIMEKQKPDGVFQEDAPVIHQEMIGGQRNSVEKERALTAFVLIALQEAREICEEQVNSLAASINKSRDFLAANYMNLQRPYSVAIAAYAWAQQDKLRGAFLNKFLSKAKEKNRWEEPGQRLYNVEASSYALLALLLLRDFDSVPPVVRWLNEQRYYGGGYGSTQATFMGFQALAQYQTDVPDHKDLNMVVSIQLPSRSSPVKHRIVWDSASLLRSEETKENQGFSLTAQGKGQGTLSVVTTYFAKVKGKVTCKKFDLRVNIKTAPETVKKPQDAKSTMILGHCTRYLGDEDATMSILDISMMTGFVPDTDDLNLLSTGVDRYISKYELNKAFSNKNTLIIYLDKISHSREECLAFKVHQYFNVGLIQPGAVKVYSYYNLEETCTQFYHPEKEDGMLSKLCHKEMCRCAEENCFMQQLDEKITLNDRLDKACEPGLDYVYKTKLVQVERADDFDEYLMVVENTIKSGSDEVQAGQPAPFISHIKCRDALKLKDGKHYLMWGLSSDPVGEKPNTSYIIGKDTWVEFWPEKEECQDEENQKHCEDLGAFAESMVVFGCPN</sequence>
<comment type="function">
    <text evidence="1">Precursor of non-enzymatic components of the classical, alternative, lectin and GZMK complement pathways, which consist in a cascade of proteins that leads to phagocytosis and breakdown of pathogens and signaling that strengthens the adaptive immune system.</text>
</comment>
<comment type="function">
    <molecule>Complement C3b</molecule>
    <text evidence="1">Non-enzymatic component of C5 convertase. Generated following cleavage by C3 convertase, it covalently attaches to the surface of pathogens, where it acts as an opsonin that marks the surface of antigens for removal. Complement C3b binds covalently via its reactive thioester, to cell surface carbohydrates or immune aggregates. Together with complement C4b, it then recruits the serine protease complement C2b to form the C5 convertase, which cleaves and activate C5, the next component of the complement pathways. In the alternative complement pathway, recruits the serine protease CFB to form the C5 convertase that cleaves and activates C5.</text>
</comment>
<comment type="activity regulation">
    <text evidence="1">Complement activation is inhibited by VSIG4.</text>
</comment>
<comment type="subunit">
    <text evidence="1">In absence of complement activation, the C3 precursor is first processed by the removal of 4 Arg residues, forming two chains, beta and alpha, linked by a disulfide bond.</text>
</comment>
<comment type="subunit">
    <molecule>Complement C3b</molecule>
    <text evidence="1">Complement C3b is composed of complement C3b and complement C3 beta chains that are associated via disulfide bonds. Non-enzymatic component of the C5 convertase, also named C4bC2bC3b, composed of the serine protease complement C2b (C2), complement C3b, as well as complement C4b (C4). Non-enzymatic component of the C5 convertase of the alternative complement pathways composed of the serine protease complement CFB and complement C3b. Interacts with CFP; interaction takes place together with CFB in the alternative complement system and allows the complex to become active. Interacts with CR1 (via Sushi 8 and Sushi 9 domains). Interacts with CFH.</text>
</comment>
<comment type="subcellular location">
    <subcellularLocation>
        <location evidence="1">Secreted</location>
    </subcellularLocation>
</comment>
<comment type="subcellular location">
    <molecule>Complement C3b</molecule>
    <subcellularLocation>
        <location evidence="1">Secreted</location>
    </subcellularLocation>
    <subcellularLocation>
        <location evidence="1">Cell surface</location>
    </subcellularLocation>
    <text evidence="1">Covalently associated with the surface of pathogens: the internal thioester bond reacts with carbohydrate antigens on the target surface to form amide or ester bonds.</text>
</comment>
<comment type="PTM">
    <text evidence="1">C3 precursor is first processed by the removal of 4 Arg residues, forming two chains, beta and alpha, linked by a disulfide bond. During activation of the complement systems, the alpha chain is cleaved into C3a and C3b by the C3 convertase: C3b stays linked to the beta chain, while C3a is released in the plasma. The alpha chain is cleaved by the serine protease complement C2b component of the C3 convertase to generate C3a and C3b following activation by the classical, lectin and GZMK complement systems. The alpha chain is cleaved by CFB component of the C3 convertase to generate C3a and C3b following activation by the alternative complement system.</text>
</comment>
<comment type="PTM">
    <molecule>Complement C3b</molecule>
    <text evidence="1">Complement C3b is rapidly split in two positions by factor I (CFI) and a cofactor (CFH) to form iC3b (inactivated C3b) and C3f which is released. CFI and CFH catalyze proteolytic degradation of already-deposited complement C3b. Then iC3b is slowly cleaved (possibly by CFI) to form C3c (beta chain + alpha' chain fragment 1 + alpha' chain fragment 2), C3dg and C3f. Other proteases produce other fragments such as C3d or C3g.</text>
</comment>
<comment type="PTM">
    <molecule>Complement C3b</molecule>
    <text evidence="1">Upon activation, the internal thioester bond reacts with carbohydrate antigens on the target surface to form amide or ester bonds, leading to covalent association with the surface of pathogens.</text>
</comment>
<comment type="PTM">
    <molecule>Complement C3b</molecule>
    <text evidence="1">Complement C3b interacts with complement C4b via a thioester linkage.</text>
</comment>
<comment type="PTM">
    <text evidence="1">Phosphorylated by FAM20C in the extracellular medium.</text>
</comment>